<keyword id="KW-1003">Cell membrane</keyword>
<keyword id="KW-0350">Heme biosynthesis</keyword>
<keyword id="KW-0408">Iron</keyword>
<keyword id="KW-0472">Membrane</keyword>
<keyword id="KW-0479">Metal-binding</keyword>
<keyword id="KW-0560">Oxidoreductase</keyword>
<keyword id="KW-0812">Transmembrane</keyword>
<keyword id="KW-1133">Transmembrane helix</keyword>
<comment type="function">
    <text evidence="1">Catalyzes the conversion of heme O to heme A by two successive hydroxylations of the methyl group at C8. The first hydroxylation forms heme I, the second hydroxylation results in an unstable dihydroxymethyl group, which spontaneously dehydrates, resulting in the formyl group of heme A.</text>
</comment>
<comment type="catalytic activity">
    <reaction evidence="1">
        <text>Fe(II)-heme o + 2 A + H2O = Fe(II)-heme a + 2 AH2</text>
        <dbReference type="Rhea" id="RHEA:63388"/>
        <dbReference type="ChEBI" id="CHEBI:13193"/>
        <dbReference type="ChEBI" id="CHEBI:15377"/>
        <dbReference type="ChEBI" id="CHEBI:17499"/>
        <dbReference type="ChEBI" id="CHEBI:60530"/>
        <dbReference type="ChEBI" id="CHEBI:61715"/>
        <dbReference type="EC" id="1.17.99.9"/>
    </reaction>
    <physiologicalReaction direction="left-to-right" evidence="1">
        <dbReference type="Rhea" id="RHEA:63389"/>
    </physiologicalReaction>
</comment>
<comment type="cofactor">
    <cofactor evidence="1">
        <name>heme b</name>
        <dbReference type="ChEBI" id="CHEBI:60344"/>
    </cofactor>
</comment>
<comment type="pathway">
    <text evidence="1">Porphyrin-containing compound metabolism; heme A biosynthesis; heme A from heme O: step 1/1.</text>
</comment>
<comment type="subunit">
    <text evidence="1">Interacts with CtaB.</text>
</comment>
<comment type="subcellular location">
    <subcellularLocation>
        <location evidence="1">Cell membrane</location>
        <topology evidence="1">Multi-pass membrane protein</topology>
    </subcellularLocation>
</comment>
<comment type="similarity">
    <text evidence="1">Belongs to the COX15/CtaA family. Type 2 subfamily.</text>
</comment>
<protein>
    <recommendedName>
        <fullName evidence="1">Heme A synthase</fullName>
        <shortName evidence="1">HAS</shortName>
        <ecNumber evidence="1">1.17.99.9</ecNumber>
    </recommendedName>
    <alternativeName>
        <fullName evidence="1">Cytochrome aa3-controlling protein</fullName>
    </alternativeName>
</protein>
<proteinExistence type="inferred from homology"/>
<dbReference type="EC" id="1.17.99.9" evidence="1"/>
<dbReference type="EMBL" id="CP000450">
    <property type="protein sequence ID" value="ABI58860.1"/>
    <property type="molecule type" value="Genomic_DNA"/>
</dbReference>
<dbReference type="RefSeq" id="WP_011633701.1">
    <property type="nucleotide sequence ID" value="NC_008344.1"/>
</dbReference>
<dbReference type="SMR" id="Q0AIG6"/>
<dbReference type="STRING" id="335283.Neut_0588"/>
<dbReference type="KEGG" id="net:Neut_0588"/>
<dbReference type="eggNOG" id="COG1612">
    <property type="taxonomic scope" value="Bacteria"/>
</dbReference>
<dbReference type="HOGENOM" id="CLU_017627_0_0_4"/>
<dbReference type="OrthoDB" id="1447144at2"/>
<dbReference type="UniPathway" id="UPA00269">
    <property type="reaction ID" value="UER00713"/>
</dbReference>
<dbReference type="Proteomes" id="UP000001966">
    <property type="component" value="Chromosome"/>
</dbReference>
<dbReference type="GO" id="GO:0005886">
    <property type="term" value="C:plasma membrane"/>
    <property type="evidence" value="ECO:0007669"/>
    <property type="project" value="UniProtKB-SubCell"/>
</dbReference>
<dbReference type="GO" id="GO:0046872">
    <property type="term" value="F:metal ion binding"/>
    <property type="evidence" value="ECO:0007669"/>
    <property type="project" value="UniProtKB-KW"/>
</dbReference>
<dbReference type="GO" id="GO:0016653">
    <property type="term" value="F:oxidoreductase activity, acting on NAD(P)H, heme protein as acceptor"/>
    <property type="evidence" value="ECO:0007669"/>
    <property type="project" value="InterPro"/>
</dbReference>
<dbReference type="GO" id="GO:0006784">
    <property type="term" value="P:heme A biosynthetic process"/>
    <property type="evidence" value="ECO:0007669"/>
    <property type="project" value="UniProtKB-UniRule"/>
</dbReference>
<dbReference type="HAMAP" id="MF_01665">
    <property type="entry name" value="HemeA_synth_type2"/>
    <property type="match status" value="1"/>
</dbReference>
<dbReference type="InterPro" id="IPR003780">
    <property type="entry name" value="COX15/CtaA_fam"/>
</dbReference>
<dbReference type="InterPro" id="IPR023754">
    <property type="entry name" value="HemeA_Synthase_type2"/>
</dbReference>
<dbReference type="PANTHER" id="PTHR23289">
    <property type="entry name" value="CYTOCHROME C OXIDASE ASSEMBLY PROTEIN COX15"/>
    <property type="match status" value="1"/>
</dbReference>
<dbReference type="PANTHER" id="PTHR23289:SF2">
    <property type="entry name" value="CYTOCHROME C OXIDASE ASSEMBLY PROTEIN COX15 HOMOLOG"/>
    <property type="match status" value="1"/>
</dbReference>
<dbReference type="Pfam" id="PF02628">
    <property type="entry name" value="COX15-CtaA"/>
    <property type="match status" value="1"/>
</dbReference>
<name>CTAA_NITEC</name>
<gene>
    <name evidence="1" type="primary">ctaA</name>
    <name type="ordered locus">Neut_0588</name>
</gene>
<reference key="1">
    <citation type="journal article" date="2007" name="Environ. Microbiol.">
        <title>Whole-genome analysis of the ammonia-oxidizing bacterium, Nitrosomonas eutropha C91: implications for niche adaptation.</title>
        <authorList>
            <person name="Stein L.Y."/>
            <person name="Arp D.J."/>
            <person name="Berube P.M."/>
            <person name="Chain P.S."/>
            <person name="Hauser L."/>
            <person name="Jetten M.S."/>
            <person name="Klotz M.G."/>
            <person name="Larimer F.W."/>
            <person name="Norton J.M."/>
            <person name="Op den Camp H.J.M."/>
            <person name="Shin M."/>
            <person name="Wei X."/>
        </authorList>
    </citation>
    <scope>NUCLEOTIDE SEQUENCE [LARGE SCALE GENOMIC DNA]</scope>
    <source>
        <strain>DSM 101675 / C91 / Nm57</strain>
    </source>
</reference>
<evidence type="ECO:0000255" key="1">
    <source>
        <dbReference type="HAMAP-Rule" id="MF_01665"/>
    </source>
</evidence>
<sequence>MQTNSSNSVPSAISDKYTQNHMPIAIWLLICCALVFAMIVVGGVTRLTGSGLSIVEWKPIVGTIPPIGQEDWEVLLEKYRQIPQYEQVNKGMTLDEFKGIFWWEYFHRLLGRLIGLVYFIPFVYFMVRKRIDRLLGLKLLGIFALGALQGLMGWYMVMSGLADNVYVSQYRLTAHLGLAFVIYAAMFWVATGLISPLNTHLSDPVSVHKLKKFAWMLTGLIFVMVLSGGLVAGIHAGRAYNTFPLMDGFLIPPAMFVLEPWYRNFFDNITTVQFDHRLIAWLLIFSIPWFWFKAKQLSLSYSGRLACHLLLLMLLIQAGLGITTLLLSVPLTFATAHQAGAVLLFTAALWVCRKLS</sequence>
<accession>Q0AIG6</accession>
<feature type="chain" id="PRO_0000349052" description="Heme A synthase">
    <location>
        <begin position="1"/>
        <end position="356"/>
    </location>
</feature>
<feature type="transmembrane region" description="Helical" evidence="1">
    <location>
        <begin position="24"/>
        <end position="44"/>
    </location>
</feature>
<feature type="transmembrane region" description="Helical" evidence="1">
    <location>
        <begin position="106"/>
        <end position="126"/>
    </location>
</feature>
<feature type="transmembrane region" description="Helical" evidence="1">
    <location>
        <begin position="139"/>
        <end position="159"/>
    </location>
</feature>
<feature type="transmembrane region" description="Helical" evidence="1">
    <location>
        <begin position="174"/>
        <end position="194"/>
    </location>
</feature>
<feature type="transmembrane region" description="Helical" evidence="1">
    <location>
        <begin position="214"/>
        <end position="234"/>
    </location>
</feature>
<feature type="transmembrane region" description="Helical" evidence="1">
    <location>
        <begin position="278"/>
        <end position="298"/>
    </location>
</feature>
<feature type="transmembrane region" description="Helical" evidence="1">
    <location>
        <begin position="309"/>
        <end position="329"/>
    </location>
</feature>
<feature type="transmembrane region" description="Helical" evidence="1">
    <location>
        <begin position="331"/>
        <end position="351"/>
    </location>
</feature>
<feature type="binding site" description="axial binding residue" evidence="1">
    <location>
        <position position="276"/>
    </location>
    <ligand>
        <name>heme</name>
        <dbReference type="ChEBI" id="CHEBI:30413"/>
    </ligand>
    <ligandPart>
        <name>Fe</name>
        <dbReference type="ChEBI" id="CHEBI:18248"/>
    </ligandPart>
</feature>
<feature type="binding site" description="axial binding residue" evidence="1">
    <location>
        <position position="337"/>
    </location>
    <ligand>
        <name>heme</name>
        <dbReference type="ChEBI" id="CHEBI:30413"/>
    </ligand>
    <ligandPart>
        <name>Fe</name>
        <dbReference type="ChEBI" id="CHEBI:18248"/>
    </ligandPart>
</feature>
<organism>
    <name type="scientific">Nitrosomonas eutropha (strain DSM 101675 / C91 / Nm57)</name>
    <dbReference type="NCBI Taxonomy" id="335283"/>
    <lineage>
        <taxon>Bacteria</taxon>
        <taxon>Pseudomonadati</taxon>
        <taxon>Pseudomonadota</taxon>
        <taxon>Betaproteobacteria</taxon>
        <taxon>Nitrosomonadales</taxon>
        <taxon>Nitrosomonadaceae</taxon>
        <taxon>Nitrosomonas</taxon>
    </lineage>
</organism>